<proteinExistence type="inferred from homology"/>
<sequence>MSKKVSKNVAKARAAVEPRPYTLQDAVPLLQQVKFAKFDETVDLTMRLGVDPRHADQMVRGTVVLPHGLGKTKKVAVITTGDRQKEAEAAGAEIVGGEELVEKIQKESWTDFDALIATPDMMRSVGRLGKVLGPRGLMPNPKTGTVTNDVAAAVKEIKAGKIEYRTDKTALVHVPVGKLSFPAEKLIDNAMTVITSVVRAKPSAAKGKYIKGITLSSTMGPGIPLDGSVADAAAKA</sequence>
<organism>
    <name type="scientific">Acidobacterium capsulatum (strain ATCC 51196 / DSM 11244 / BCRC 80197 / JCM 7670 / NBRC 15755 / NCIMB 13165 / 161)</name>
    <dbReference type="NCBI Taxonomy" id="240015"/>
    <lineage>
        <taxon>Bacteria</taxon>
        <taxon>Pseudomonadati</taxon>
        <taxon>Acidobacteriota</taxon>
        <taxon>Terriglobia</taxon>
        <taxon>Terriglobales</taxon>
        <taxon>Acidobacteriaceae</taxon>
        <taxon>Acidobacterium</taxon>
    </lineage>
</organism>
<gene>
    <name evidence="1" type="primary">rplA</name>
    <name type="ordered locus">ACP_2925</name>
</gene>
<reference key="1">
    <citation type="journal article" date="2009" name="Appl. Environ. Microbiol.">
        <title>Three genomes from the phylum Acidobacteria provide insight into the lifestyles of these microorganisms in soils.</title>
        <authorList>
            <person name="Ward N.L."/>
            <person name="Challacombe J.F."/>
            <person name="Janssen P.H."/>
            <person name="Henrissat B."/>
            <person name="Coutinho P.M."/>
            <person name="Wu M."/>
            <person name="Xie G."/>
            <person name="Haft D.H."/>
            <person name="Sait M."/>
            <person name="Badger J."/>
            <person name="Barabote R.D."/>
            <person name="Bradley B."/>
            <person name="Brettin T.S."/>
            <person name="Brinkac L.M."/>
            <person name="Bruce D."/>
            <person name="Creasy T."/>
            <person name="Daugherty S.C."/>
            <person name="Davidsen T.M."/>
            <person name="DeBoy R.T."/>
            <person name="Detter J.C."/>
            <person name="Dodson R.J."/>
            <person name="Durkin A.S."/>
            <person name="Ganapathy A."/>
            <person name="Gwinn-Giglio M."/>
            <person name="Han C.S."/>
            <person name="Khouri H."/>
            <person name="Kiss H."/>
            <person name="Kothari S.P."/>
            <person name="Madupu R."/>
            <person name="Nelson K.E."/>
            <person name="Nelson W.C."/>
            <person name="Paulsen I."/>
            <person name="Penn K."/>
            <person name="Ren Q."/>
            <person name="Rosovitz M.J."/>
            <person name="Selengut J.D."/>
            <person name="Shrivastava S."/>
            <person name="Sullivan S.A."/>
            <person name="Tapia R."/>
            <person name="Thompson L.S."/>
            <person name="Watkins K.L."/>
            <person name="Yang Q."/>
            <person name="Yu C."/>
            <person name="Zafar N."/>
            <person name="Zhou L."/>
            <person name="Kuske C.R."/>
        </authorList>
    </citation>
    <scope>NUCLEOTIDE SEQUENCE [LARGE SCALE GENOMIC DNA]</scope>
    <source>
        <strain>ATCC 51196 / DSM 11244 / BCRC 80197 / JCM 7670 / NBRC 15755 / NCIMB 13165 / 161</strain>
    </source>
</reference>
<comment type="function">
    <text evidence="1">Binds directly to 23S rRNA. The L1 stalk is quite mobile in the ribosome, and is involved in E site tRNA release.</text>
</comment>
<comment type="function">
    <text evidence="1">Protein L1 is also a translational repressor protein, it controls the translation of the L11 operon by binding to its mRNA.</text>
</comment>
<comment type="subunit">
    <text evidence="1">Part of the 50S ribosomal subunit.</text>
</comment>
<comment type="similarity">
    <text evidence="1">Belongs to the universal ribosomal protein uL1 family.</text>
</comment>
<keyword id="KW-1185">Reference proteome</keyword>
<keyword id="KW-0678">Repressor</keyword>
<keyword id="KW-0687">Ribonucleoprotein</keyword>
<keyword id="KW-0689">Ribosomal protein</keyword>
<keyword id="KW-0694">RNA-binding</keyword>
<keyword id="KW-0699">rRNA-binding</keyword>
<keyword id="KW-0810">Translation regulation</keyword>
<keyword id="KW-0820">tRNA-binding</keyword>
<feature type="chain" id="PRO_1000165649" description="Large ribosomal subunit protein uL1">
    <location>
        <begin position="1"/>
        <end position="236"/>
    </location>
</feature>
<dbReference type="EMBL" id="CP001472">
    <property type="protein sequence ID" value="ACO33228.1"/>
    <property type="molecule type" value="Genomic_DNA"/>
</dbReference>
<dbReference type="RefSeq" id="WP_015897975.1">
    <property type="nucleotide sequence ID" value="NC_012483.1"/>
</dbReference>
<dbReference type="SMR" id="C1F3Y0"/>
<dbReference type="FunCoup" id="C1F3Y0">
    <property type="interactions" value="654"/>
</dbReference>
<dbReference type="STRING" id="240015.ACP_2925"/>
<dbReference type="KEGG" id="aca:ACP_2925"/>
<dbReference type="eggNOG" id="COG0081">
    <property type="taxonomic scope" value="Bacteria"/>
</dbReference>
<dbReference type="HOGENOM" id="CLU_062853_0_0_0"/>
<dbReference type="InParanoid" id="C1F3Y0"/>
<dbReference type="OrthoDB" id="9803740at2"/>
<dbReference type="Proteomes" id="UP000002207">
    <property type="component" value="Chromosome"/>
</dbReference>
<dbReference type="GO" id="GO:0015934">
    <property type="term" value="C:large ribosomal subunit"/>
    <property type="evidence" value="ECO:0007669"/>
    <property type="project" value="InterPro"/>
</dbReference>
<dbReference type="GO" id="GO:0019843">
    <property type="term" value="F:rRNA binding"/>
    <property type="evidence" value="ECO:0007669"/>
    <property type="project" value="UniProtKB-UniRule"/>
</dbReference>
<dbReference type="GO" id="GO:0003735">
    <property type="term" value="F:structural constituent of ribosome"/>
    <property type="evidence" value="ECO:0007669"/>
    <property type="project" value="InterPro"/>
</dbReference>
<dbReference type="GO" id="GO:0000049">
    <property type="term" value="F:tRNA binding"/>
    <property type="evidence" value="ECO:0007669"/>
    <property type="project" value="UniProtKB-KW"/>
</dbReference>
<dbReference type="GO" id="GO:0006417">
    <property type="term" value="P:regulation of translation"/>
    <property type="evidence" value="ECO:0007669"/>
    <property type="project" value="UniProtKB-KW"/>
</dbReference>
<dbReference type="GO" id="GO:0006412">
    <property type="term" value="P:translation"/>
    <property type="evidence" value="ECO:0007669"/>
    <property type="project" value="UniProtKB-UniRule"/>
</dbReference>
<dbReference type="CDD" id="cd00403">
    <property type="entry name" value="Ribosomal_L1"/>
    <property type="match status" value="1"/>
</dbReference>
<dbReference type="FunFam" id="3.40.50.790:FF:000001">
    <property type="entry name" value="50S ribosomal protein L1"/>
    <property type="match status" value="1"/>
</dbReference>
<dbReference type="Gene3D" id="3.30.190.20">
    <property type="match status" value="1"/>
</dbReference>
<dbReference type="Gene3D" id="3.40.50.790">
    <property type="match status" value="1"/>
</dbReference>
<dbReference type="HAMAP" id="MF_01318_B">
    <property type="entry name" value="Ribosomal_uL1_B"/>
    <property type="match status" value="1"/>
</dbReference>
<dbReference type="InterPro" id="IPR005878">
    <property type="entry name" value="Ribosom_uL1_bac-type"/>
</dbReference>
<dbReference type="InterPro" id="IPR002143">
    <property type="entry name" value="Ribosomal_uL1"/>
</dbReference>
<dbReference type="InterPro" id="IPR023674">
    <property type="entry name" value="Ribosomal_uL1-like"/>
</dbReference>
<dbReference type="InterPro" id="IPR028364">
    <property type="entry name" value="Ribosomal_uL1/biogenesis"/>
</dbReference>
<dbReference type="InterPro" id="IPR016095">
    <property type="entry name" value="Ribosomal_uL1_3-a/b-sand"/>
</dbReference>
<dbReference type="InterPro" id="IPR023673">
    <property type="entry name" value="Ribosomal_uL1_CS"/>
</dbReference>
<dbReference type="NCBIfam" id="TIGR01169">
    <property type="entry name" value="rplA_bact"/>
    <property type="match status" value="1"/>
</dbReference>
<dbReference type="PANTHER" id="PTHR36427">
    <property type="entry name" value="54S RIBOSOMAL PROTEIN L1, MITOCHONDRIAL"/>
    <property type="match status" value="1"/>
</dbReference>
<dbReference type="PANTHER" id="PTHR36427:SF3">
    <property type="entry name" value="LARGE RIBOSOMAL SUBUNIT PROTEIN UL1M"/>
    <property type="match status" value="1"/>
</dbReference>
<dbReference type="Pfam" id="PF00687">
    <property type="entry name" value="Ribosomal_L1"/>
    <property type="match status" value="1"/>
</dbReference>
<dbReference type="PIRSF" id="PIRSF002155">
    <property type="entry name" value="Ribosomal_L1"/>
    <property type="match status" value="1"/>
</dbReference>
<dbReference type="SUPFAM" id="SSF56808">
    <property type="entry name" value="Ribosomal protein L1"/>
    <property type="match status" value="1"/>
</dbReference>
<dbReference type="PROSITE" id="PS01199">
    <property type="entry name" value="RIBOSOMAL_L1"/>
    <property type="match status" value="1"/>
</dbReference>
<accession>C1F3Y0</accession>
<name>RL1_ACIC5</name>
<protein>
    <recommendedName>
        <fullName evidence="1">Large ribosomal subunit protein uL1</fullName>
    </recommendedName>
    <alternativeName>
        <fullName evidence="2">50S ribosomal protein L1</fullName>
    </alternativeName>
</protein>
<evidence type="ECO:0000255" key="1">
    <source>
        <dbReference type="HAMAP-Rule" id="MF_01318"/>
    </source>
</evidence>
<evidence type="ECO:0000305" key="2"/>